<name>RUVB_WOLWR</name>
<reference key="1">
    <citation type="journal article" date="2009" name="Proc. Natl. Acad. Sci. U.S.A.">
        <title>The mosaic genome structure of the Wolbachia wRi strain infecting Drosophila simulans.</title>
        <authorList>
            <person name="Klasson L."/>
            <person name="Westberg J."/>
            <person name="Sapountzis P."/>
            <person name="Naeslund K."/>
            <person name="Lutnaes Y."/>
            <person name="Darby A.C."/>
            <person name="Veneti Z."/>
            <person name="Chen L."/>
            <person name="Braig H.R."/>
            <person name="Garrett R."/>
            <person name="Bourtzis K."/>
            <person name="Andersson S.G."/>
        </authorList>
    </citation>
    <scope>NUCLEOTIDE SEQUENCE [LARGE SCALE GENOMIC DNA]</scope>
    <source>
        <strain>wRi</strain>
    </source>
</reference>
<comment type="function">
    <text evidence="1">The RuvA-RuvB-RuvC complex processes Holliday junction (HJ) DNA during genetic recombination and DNA repair, while the RuvA-RuvB complex plays an important role in the rescue of blocked DNA replication forks via replication fork reversal (RFR). RuvA specifically binds to HJ cruciform DNA, conferring on it an open structure. The RuvB hexamer acts as an ATP-dependent pump, pulling dsDNA into and through the RuvAB complex. RuvB forms 2 homohexamers on either side of HJ DNA bound by 1 or 2 RuvA tetramers; 4 subunits per hexamer contact DNA at a time. Coordinated motions by a converter formed by DNA-disengaged RuvB subunits stimulates ATP hydrolysis and nucleotide exchange. Immobilization of the converter enables RuvB to convert the ATP-contained energy into a lever motion, pulling 2 nucleotides of DNA out of the RuvA tetramer per ATP hydrolyzed, thus driving DNA branch migration. The RuvB motors rotate together with the DNA substrate, which together with the progressing nucleotide cycle form the mechanistic basis for DNA recombination by continuous HJ branch migration. Branch migration allows RuvC to scan DNA until it finds its consensus sequence, where it cleaves and resolves cruciform DNA.</text>
</comment>
<comment type="catalytic activity">
    <reaction evidence="1">
        <text>ATP + H2O = ADP + phosphate + H(+)</text>
        <dbReference type="Rhea" id="RHEA:13065"/>
        <dbReference type="ChEBI" id="CHEBI:15377"/>
        <dbReference type="ChEBI" id="CHEBI:15378"/>
        <dbReference type="ChEBI" id="CHEBI:30616"/>
        <dbReference type="ChEBI" id="CHEBI:43474"/>
        <dbReference type="ChEBI" id="CHEBI:456216"/>
    </reaction>
</comment>
<comment type="subunit">
    <text evidence="1">Homohexamer. Forms an RuvA(8)-RuvB(12)-Holliday junction (HJ) complex. HJ DNA is sandwiched between 2 RuvA tetramers; dsDNA enters through RuvA and exits via RuvB. An RuvB hexamer assembles on each DNA strand where it exits the tetramer. Each RuvB hexamer is contacted by two RuvA subunits (via domain III) on 2 adjacent RuvB subunits; this complex drives branch migration. In the full resolvosome a probable DNA-RuvA(4)-RuvB(12)-RuvC(2) complex forms which resolves the HJ.</text>
</comment>
<comment type="subcellular location">
    <subcellularLocation>
        <location evidence="1">Cytoplasm</location>
    </subcellularLocation>
</comment>
<comment type="domain">
    <text evidence="1">Has 3 domains, the large (RuvB-L) and small ATPase (RuvB-S) domains and the C-terminal head (RuvB-H) domain. The head domain binds DNA, while the ATPase domains jointly bind ATP, ADP or are empty depending on the state of the subunit in the translocation cycle. During a single DNA translocation step the structure of each domain remains the same, but their relative positions change.</text>
</comment>
<comment type="similarity">
    <text evidence="1">Belongs to the RuvB family.</text>
</comment>
<organism>
    <name type="scientific">Wolbachia sp. subsp. Drosophila simulans (strain wRi)</name>
    <dbReference type="NCBI Taxonomy" id="66084"/>
    <lineage>
        <taxon>Bacteria</taxon>
        <taxon>Pseudomonadati</taxon>
        <taxon>Pseudomonadota</taxon>
        <taxon>Alphaproteobacteria</taxon>
        <taxon>Rickettsiales</taxon>
        <taxon>Anaplasmataceae</taxon>
        <taxon>Wolbachieae</taxon>
        <taxon>Wolbachia</taxon>
    </lineage>
</organism>
<dbReference type="EC" id="3.6.4.-" evidence="1"/>
<dbReference type="EMBL" id="CP001391">
    <property type="protein sequence ID" value="ACN95964.1"/>
    <property type="molecule type" value="Genomic_DNA"/>
</dbReference>
<dbReference type="RefSeq" id="WP_007548585.1">
    <property type="nucleotide sequence ID" value="NZ_MKIF01000107.1"/>
</dbReference>
<dbReference type="SMR" id="C0R4X2"/>
<dbReference type="STRING" id="66084.WRi_012860"/>
<dbReference type="KEGG" id="wri:WRi_012860"/>
<dbReference type="HOGENOM" id="CLU_055599_1_0_5"/>
<dbReference type="Proteomes" id="UP000001293">
    <property type="component" value="Chromosome"/>
</dbReference>
<dbReference type="GO" id="GO:0005737">
    <property type="term" value="C:cytoplasm"/>
    <property type="evidence" value="ECO:0007669"/>
    <property type="project" value="UniProtKB-SubCell"/>
</dbReference>
<dbReference type="GO" id="GO:0048476">
    <property type="term" value="C:Holliday junction resolvase complex"/>
    <property type="evidence" value="ECO:0007669"/>
    <property type="project" value="UniProtKB-UniRule"/>
</dbReference>
<dbReference type="GO" id="GO:0005524">
    <property type="term" value="F:ATP binding"/>
    <property type="evidence" value="ECO:0007669"/>
    <property type="project" value="UniProtKB-UniRule"/>
</dbReference>
<dbReference type="GO" id="GO:0016887">
    <property type="term" value="F:ATP hydrolysis activity"/>
    <property type="evidence" value="ECO:0007669"/>
    <property type="project" value="InterPro"/>
</dbReference>
<dbReference type="GO" id="GO:0000400">
    <property type="term" value="F:four-way junction DNA binding"/>
    <property type="evidence" value="ECO:0007669"/>
    <property type="project" value="UniProtKB-UniRule"/>
</dbReference>
<dbReference type="GO" id="GO:0009378">
    <property type="term" value="F:four-way junction helicase activity"/>
    <property type="evidence" value="ECO:0007669"/>
    <property type="project" value="InterPro"/>
</dbReference>
<dbReference type="GO" id="GO:0006310">
    <property type="term" value="P:DNA recombination"/>
    <property type="evidence" value="ECO:0007669"/>
    <property type="project" value="UniProtKB-UniRule"/>
</dbReference>
<dbReference type="GO" id="GO:0006281">
    <property type="term" value="P:DNA repair"/>
    <property type="evidence" value="ECO:0007669"/>
    <property type="project" value="UniProtKB-UniRule"/>
</dbReference>
<dbReference type="CDD" id="cd00009">
    <property type="entry name" value="AAA"/>
    <property type="match status" value="1"/>
</dbReference>
<dbReference type="Gene3D" id="1.10.8.60">
    <property type="match status" value="1"/>
</dbReference>
<dbReference type="Gene3D" id="3.40.50.300">
    <property type="entry name" value="P-loop containing nucleotide triphosphate hydrolases"/>
    <property type="match status" value="1"/>
</dbReference>
<dbReference type="Gene3D" id="1.10.10.10">
    <property type="entry name" value="Winged helix-like DNA-binding domain superfamily/Winged helix DNA-binding domain"/>
    <property type="match status" value="1"/>
</dbReference>
<dbReference type="HAMAP" id="MF_00016">
    <property type="entry name" value="DNA_HJ_migration_RuvB"/>
    <property type="match status" value="1"/>
</dbReference>
<dbReference type="InterPro" id="IPR003593">
    <property type="entry name" value="AAA+_ATPase"/>
</dbReference>
<dbReference type="InterPro" id="IPR041445">
    <property type="entry name" value="AAA_lid_4"/>
</dbReference>
<dbReference type="InterPro" id="IPR004605">
    <property type="entry name" value="DNA_helicase_Holl-junc_RuvB"/>
</dbReference>
<dbReference type="InterPro" id="IPR027417">
    <property type="entry name" value="P-loop_NTPase"/>
</dbReference>
<dbReference type="InterPro" id="IPR008824">
    <property type="entry name" value="RuvB-like_N"/>
</dbReference>
<dbReference type="InterPro" id="IPR008823">
    <property type="entry name" value="RuvB_C"/>
</dbReference>
<dbReference type="InterPro" id="IPR036388">
    <property type="entry name" value="WH-like_DNA-bd_sf"/>
</dbReference>
<dbReference type="InterPro" id="IPR036390">
    <property type="entry name" value="WH_DNA-bd_sf"/>
</dbReference>
<dbReference type="NCBIfam" id="NF000868">
    <property type="entry name" value="PRK00080.1"/>
    <property type="match status" value="1"/>
</dbReference>
<dbReference type="NCBIfam" id="TIGR00635">
    <property type="entry name" value="ruvB"/>
    <property type="match status" value="1"/>
</dbReference>
<dbReference type="PANTHER" id="PTHR42848">
    <property type="match status" value="1"/>
</dbReference>
<dbReference type="PANTHER" id="PTHR42848:SF1">
    <property type="entry name" value="HOLLIDAY JUNCTION BRANCH MIGRATION COMPLEX SUBUNIT RUVB"/>
    <property type="match status" value="1"/>
</dbReference>
<dbReference type="Pfam" id="PF17864">
    <property type="entry name" value="AAA_lid_4"/>
    <property type="match status" value="1"/>
</dbReference>
<dbReference type="Pfam" id="PF05491">
    <property type="entry name" value="RuvB_C"/>
    <property type="match status" value="1"/>
</dbReference>
<dbReference type="Pfam" id="PF05496">
    <property type="entry name" value="RuvB_N"/>
    <property type="match status" value="1"/>
</dbReference>
<dbReference type="SMART" id="SM00382">
    <property type="entry name" value="AAA"/>
    <property type="match status" value="1"/>
</dbReference>
<dbReference type="SUPFAM" id="SSF52540">
    <property type="entry name" value="P-loop containing nucleoside triphosphate hydrolases"/>
    <property type="match status" value="1"/>
</dbReference>
<dbReference type="SUPFAM" id="SSF46785">
    <property type="entry name" value="Winged helix' DNA-binding domain"/>
    <property type="match status" value="1"/>
</dbReference>
<proteinExistence type="inferred from homology"/>
<accession>C0R4X2</accession>
<gene>
    <name evidence="1" type="primary">ruvB</name>
    <name type="ordered locus">WRi_012860</name>
</gene>
<sequence length="324" mass="36291">MKSISCGKEYTEDVRNINIRPEQLDDFVGQKDLIQNLKVFINAAQTRTEALDHVLLYGPPGLGKTTLAQIVSKELRVSFRATSGPLLSKAGDLAAVLTTLNAKDVLFIDEIHRLNRSIEEVLYTAMEDFCLDILVGEGPSTRTLRIDLPPFTLIGATTRLGLLSAPLRDRFGIPLHLEFYSFEELVNIIKRGARVLSAEIEEDAAREIACRARGTPRIALRLLRRIRDFVEVKDDKKITYEVADSVLLKLGVDKMGLNKLDMNYLRFLFNTSGPVGIDTISIALSEDVGNIEETVEPYLIKISFVKRTPRGRVLTDQAKEYLSL</sequence>
<keyword id="KW-0067">ATP-binding</keyword>
<keyword id="KW-0963">Cytoplasm</keyword>
<keyword id="KW-0227">DNA damage</keyword>
<keyword id="KW-0233">DNA recombination</keyword>
<keyword id="KW-0234">DNA repair</keyword>
<keyword id="KW-0238">DNA-binding</keyword>
<keyword id="KW-0378">Hydrolase</keyword>
<keyword id="KW-0547">Nucleotide-binding</keyword>
<evidence type="ECO:0000255" key="1">
    <source>
        <dbReference type="HAMAP-Rule" id="MF_00016"/>
    </source>
</evidence>
<feature type="chain" id="PRO_1000116667" description="Holliday junction branch migration complex subunit RuvB">
    <location>
        <begin position="1"/>
        <end position="324"/>
    </location>
</feature>
<feature type="region of interest" description="Large ATPase domain (RuvB-L)" evidence="1">
    <location>
        <begin position="1"/>
        <end position="180"/>
    </location>
</feature>
<feature type="region of interest" description="Small ATPAse domain (RuvB-S)" evidence="1">
    <location>
        <begin position="181"/>
        <end position="251"/>
    </location>
</feature>
<feature type="region of interest" description="Head domain (RuvB-H)" evidence="1">
    <location>
        <begin position="254"/>
        <end position="324"/>
    </location>
</feature>
<feature type="binding site" evidence="1">
    <location>
        <position position="19"/>
    </location>
    <ligand>
        <name>ATP</name>
        <dbReference type="ChEBI" id="CHEBI:30616"/>
    </ligand>
</feature>
<feature type="binding site" evidence="1">
    <location>
        <position position="20"/>
    </location>
    <ligand>
        <name>ATP</name>
        <dbReference type="ChEBI" id="CHEBI:30616"/>
    </ligand>
</feature>
<feature type="binding site" evidence="1">
    <location>
        <position position="61"/>
    </location>
    <ligand>
        <name>ATP</name>
        <dbReference type="ChEBI" id="CHEBI:30616"/>
    </ligand>
</feature>
<feature type="binding site" evidence="1">
    <location>
        <position position="64"/>
    </location>
    <ligand>
        <name>ATP</name>
        <dbReference type="ChEBI" id="CHEBI:30616"/>
    </ligand>
</feature>
<feature type="binding site" evidence="1">
    <location>
        <position position="65"/>
    </location>
    <ligand>
        <name>ATP</name>
        <dbReference type="ChEBI" id="CHEBI:30616"/>
    </ligand>
</feature>
<feature type="binding site" evidence="1">
    <location>
        <position position="65"/>
    </location>
    <ligand>
        <name>Mg(2+)</name>
        <dbReference type="ChEBI" id="CHEBI:18420"/>
    </ligand>
</feature>
<feature type="binding site" evidence="1">
    <location>
        <position position="66"/>
    </location>
    <ligand>
        <name>ATP</name>
        <dbReference type="ChEBI" id="CHEBI:30616"/>
    </ligand>
</feature>
<feature type="binding site" evidence="1">
    <location>
        <begin position="127"/>
        <end position="129"/>
    </location>
    <ligand>
        <name>ATP</name>
        <dbReference type="ChEBI" id="CHEBI:30616"/>
    </ligand>
</feature>
<feature type="binding site" evidence="1">
    <location>
        <position position="170"/>
    </location>
    <ligand>
        <name>ATP</name>
        <dbReference type="ChEBI" id="CHEBI:30616"/>
    </ligand>
</feature>
<feature type="binding site" evidence="1">
    <location>
        <position position="180"/>
    </location>
    <ligand>
        <name>ATP</name>
        <dbReference type="ChEBI" id="CHEBI:30616"/>
    </ligand>
</feature>
<feature type="binding site" evidence="1">
    <location>
        <position position="217"/>
    </location>
    <ligand>
        <name>ATP</name>
        <dbReference type="ChEBI" id="CHEBI:30616"/>
    </ligand>
</feature>
<feature type="binding site" evidence="1">
    <location>
        <position position="307"/>
    </location>
    <ligand>
        <name>DNA</name>
        <dbReference type="ChEBI" id="CHEBI:16991"/>
    </ligand>
</feature>
<feature type="binding site" evidence="1">
    <location>
        <position position="312"/>
    </location>
    <ligand>
        <name>DNA</name>
        <dbReference type="ChEBI" id="CHEBI:16991"/>
    </ligand>
</feature>
<protein>
    <recommendedName>
        <fullName evidence="1">Holliday junction branch migration complex subunit RuvB</fullName>
        <ecNumber evidence="1">3.6.4.-</ecNumber>
    </recommendedName>
</protein>